<keyword id="KW-1185">Reference proteome</keyword>
<keyword id="KW-0687">Ribonucleoprotein</keyword>
<keyword id="KW-0689">Ribosomal protein</keyword>
<keyword id="KW-0694">RNA-binding</keyword>
<keyword id="KW-0699">rRNA-binding</keyword>
<evidence type="ECO:0000255" key="1">
    <source>
        <dbReference type="HAMAP-Rule" id="MF_00736"/>
    </source>
</evidence>
<evidence type="ECO:0000305" key="2"/>
<gene>
    <name evidence="1" type="primary">rpl11</name>
    <name type="ordered locus">Mlab_1582</name>
</gene>
<organism>
    <name type="scientific">Methanocorpusculum labreanum (strain ATCC 43576 / DSM 4855 / Z)</name>
    <dbReference type="NCBI Taxonomy" id="410358"/>
    <lineage>
        <taxon>Archaea</taxon>
        <taxon>Methanobacteriati</taxon>
        <taxon>Methanobacteriota</taxon>
        <taxon>Stenosarchaea group</taxon>
        <taxon>Methanomicrobia</taxon>
        <taxon>Methanomicrobiales</taxon>
        <taxon>Methanocorpusculaceae</taxon>
        <taxon>Methanocorpusculum</taxon>
    </lineage>
</organism>
<proteinExistence type="inferred from homology"/>
<accession>A2STU0</accession>
<name>RL11_METLZ</name>
<comment type="function">
    <text evidence="1">Forms part of the ribosomal stalk which helps the ribosome interact with GTP-bound translation factors.</text>
</comment>
<comment type="subunit">
    <text evidence="1">Part of the ribosomal stalk of the 50S ribosomal subunit. Interacts with L10 and the large rRNA to form the base of the stalk. L10 forms an elongated spine to which L12 dimers bind in a sequential fashion forming a multimeric L10(L12)X complex.</text>
</comment>
<comment type="similarity">
    <text evidence="1">Belongs to the universal ribosomal protein uL11 family.</text>
</comment>
<feature type="chain" id="PRO_1000046211" description="Large ribosomal subunit protein uL11">
    <location>
        <begin position="1"/>
        <end position="157"/>
    </location>
</feature>
<sequence>MAETVEVLVPGGRATAGPPLGPALGPLGINVKAVVDDINKKTAEFNGMSVPVTVMVDDKKNVTLTVGIPPTTALVMKEAGVEKGSGTPNTQAVGNLPLEAVIRIAKMKMESMLSYDLKTAAKEVMGTCVSVGVTVEGKTAKQAIAAVNAGEWDEQLA</sequence>
<dbReference type="EMBL" id="CP000559">
    <property type="protein sequence ID" value="ABN07746.1"/>
    <property type="molecule type" value="Genomic_DNA"/>
</dbReference>
<dbReference type="RefSeq" id="WP_011833949.1">
    <property type="nucleotide sequence ID" value="NC_008942.1"/>
</dbReference>
<dbReference type="SMR" id="A2STU0"/>
<dbReference type="STRING" id="410358.Mlab_1582"/>
<dbReference type="GeneID" id="4795154"/>
<dbReference type="KEGG" id="mla:Mlab_1582"/>
<dbReference type="eggNOG" id="arCOG04372">
    <property type="taxonomic scope" value="Archaea"/>
</dbReference>
<dbReference type="HOGENOM" id="CLU_074237_4_0_2"/>
<dbReference type="OrthoDB" id="8842at2157"/>
<dbReference type="Proteomes" id="UP000000365">
    <property type="component" value="Chromosome"/>
</dbReference>
<dbReference type="GO" id="GO:0015934">
    <property type="term" value="C:large ribosomal subunit"/>
    <property type="evidence" value="ECO:0007669"/>
    <property type="project" value="TreeGrafter"/>
</dbReference>
<dbReference type="GO" id="GO:0070180">
    <property type="term" value="F:large ribosomal subunit rRNA binding"/>
    <property type="evidence" value="ECO:0007669"/>
    <property type="project" value="UniProtKB-UniRule"/>
</dbReference>
<dbReference type="GO" id="GO:0003735">
    <property type="term" value="F:structural constituent of ribosome"/>
    <property type="evidence" value="ECO:0007669"/>
    <property type="project" value="InterPro"/>
</dbReference>
<dbReference type="GO" id="GO:0006412">
    <property type="term" value="P:translation"/>
    <property type="evidence" value="ECO:0007669"/>
    <property type="project" value="UniProtKB-UniRule"/>
</dbReference>
<dbReference type="CDD" id="cd00349">
    <property type="entry name" value="Ribosomal_L11"/>
    <property type="match status" value="1"/>
</dbReference>
<dbReference type="Gene3D" id="1.10.10.250">
    <property type="entry name" value="Ribosomal protein L11, C-terminal domain"/>
    <property type="match status" value="1"/>
</dbReference>
<dbReference type="Gene3D" id="3.30.1550.10">
    <property type="entry name" value="Ribosomal protein L11/L12, N-terminal domain"/>
    <property type="match status" value="1"/>
</dbReference>
<dbReference type="HAMAP" id="MF_00736">
    <property type="entry name" value="Ribosomal_uL11"/>
    <property type="match status" value="1"/>
</dbReference>
<dbReference type="InterPro" id="IPR000911">
    <property type="entry name" value="Ribosomal_uL11"/>
</dbReference>
<dbReference type="InterPro" id="IPR020783">
    <property type="entry name" value="Ribosomal_uL11_C"/>
</dbReference>
<dbReference type="InterPro" id="IPR036769">
    <property type="entry name" value="Ribosomal_uL11_C_sf"/>
</dbReference>
<dbReference type="InterPro" id="IPR020785">
    <property type="entry name" value="Ribosomal_uL11_CS"/>
</dbReference>
<dbReference type="InterPro" id="IPR020784">
    <property type="entry name" value="Ribosomal_uL11_N"/>
</dbReference>
<dbReference type="InterPro" id="IPR036796">
    <property type="entry name" value="Ribosomal_uL11_N_sf"/>
</dbReference>
<dbReference type="NCBIfam" id="NF002232">
    <property type="entry name" value="PRK01143.1"/>
    <property type="match status" value="1"/>
</dbReference>
<dbReference type="PANTHER" id="PTHR11661">
    <property type="entry name" value="60S RIBOSOMAL PROTEIN L12"/>
    <property type="match status" value="1"/>
</dbReference>
<dbReference type="PANTHER" id="PTHR11661:SF1">
    <property type="entry name" value="LARGE RIBOSOMAL SUBUNIT PROTEIN UL11M"/>
    <property type="match status" value="1"/>
</dbReference>
<dbReference type="Pfam" id="PF00298">
    <property type="entry name" value="Ribosomal_L11"/>
    <property type="match status" value="1"/>
</dbReference>
<dbReference type="Pfam" id="PF03946">
    <property type="entry name" value="Ribosomal_L11_N"/>
    <property type="match status" value="1"/>
</dbReference>
<dbReference type="SMART" id="SM00649">
    <property type="entry name" value="RL11"/>
    <property type="match status" value="1"/>
</dbReference>
<dbReference type="SUPFAM" id="SSF54747">
    <property type="entry name" value="Ribosomal L11/L12e N-terminal domain"/>
    <property type="match status" value="1"/>
</dbReference>
<dbReference type="SUPFAM" id="SSF46906">
    <property type="entry name" value="Ribosomal protein L11, C-terminal domain"/>
    <property type="match status" value="1"/>
</dbReference>
<dbReference type="PROSITE" id="PS00359">
    <property type="entry name" value="RIBOSOMAL_L11"/>
    <property type="match status" value="1"/>
</dbReference>
<protein>
    <recommendedName>
        <fullName evidence="1">Large ribosomal subunit protein uL11</fullName>
    </recommendedName>
    <alternativeName>
        <fullName evidence="2">50S ribosomal protein L11</fullName>
    </alternativeName>
</protein>
<reference key="1">
    <citation type="journal article" date="2009" name="Stand. Genomic Sci.">
        <title>Complete genome sequence of Methanocorpusculum labreanum type strain Z.</title>
        <authorList>
            <person name="Anderson I.J."/>
            <person name="Sieprawska-Lupa M."/>
            <person name="Goltsman E."/>
            <person name="Lapidus A."/>
            <person name="Copeland A."/>
            <person name="Glavina Del Rio T."/>
            <person name="Tice H."/>
            <person name="Dalin E."/>
            <person name="Barry K."/>
            <person name="Pitluck S."/>
            <person name="Hauser L."/>
            <person name="Land M."/>
            <person name="Lucas S."/>
            <person name="Richardson P."/>
            <person name="Whitman W.B."/>
            <person name="Kyrpides N.C."/>
        </authorList>
    </citation>
    <scope>NUCLEOTIDE SEQUENCE [LARGE SCALE GENOMIC DNA]</scope>
    <source>
        <strain>ATCC 43576 / DSM 4855 / Z</strain>
    </source>
</reference>